<proteinExistence type="evidence at transcript level"/>
<comment type="function">
    <text evidence="1">Involved in the lipid remodeling steps of GPI-anchor maturation. Lipid remodeling steps consist in the generation of 2 saturated fatty chains at the sn-2 position of GPI-anchor proteins (GPI-AP). Has phospholipase A2 activity that removes an acyl-chain at the sn-2 position of GPI-anchors during the remodeling of GPI. Required for the shedding of the GPI-AP CRIPTO, but not CFC1, at the cell surface. Shedding of CRIPTO modulates Nodal signaling by allowing soluble CRIPTO to act as a Nodal coreceptor on other cells. Also indirectly involved in the translocation of RAC1 from the cytosol to the plasma membrane by maintaining the steady state amount of CAV1-enriched plasma membrane subdomains, stabilizing RAC1 at the plasma membrane.</text>
</comment>
<comment type="catalytic activity">
    <reaction evidence="1">
        <text>a 1,2-diacyl-sn-glycero-3-phosphocholine + H2O = a 1-acyl-sn-glycero-3-phosphocholine + a fatty acid + H(+)</text>
        <dbReference type="Rhea" id="RHEA:15801"/>
        <dbReference type="ChEBI" id="CHEBI:15377"/>
        <dbReference type="ChEBI" id="CHEBI:15378"/>
        <dbReference type="ChEBI" id="CHEBI:28868"/>
        <dbReference type="ChEBI" id="CHEBI:57643"/>
        <dbReference type="ChEBI" id="CHEBI:58168"/>
        <dbReference type="EC" id="3.1.1.4"/>
    </reaction>
</comment>
<comment type="subcellular location">
    <subcellularLocation>
        <location evidence="1">Cell membrane</location>
        <topology evidence="2">Multi-pass membrane protein</topology>
    </subcellularLocation>
    <subcellularLocation>
        <location evidence="1">Lysosome membrane</location>
        <topology evidence="2">Multi-pass membrane protein</topology>
    </subcellularLocation>
</comment>
<comment type="alternative products">
    <event type="alternative splicing"/>
    <isoform>
        <id>Q9ESN3-1</id>
        <name>Alpha</name>
        <sequence type="displayed"/>
    </isoform>
    <isoform>
        <id>Q9ESN3-2</id>
        <name>Beta</name>
        <sequence type="described" ref="VSP_004005"/>
    </isoform>
</comment>
<comment type="PTM">
    <text evidence="1">Glycosylated.</text>
</comment>
<comment type="disruption phenotype">
    <text evidence="4">Embryonic lethal with anterior-posterior axis formation defects in embryos from 6.7 dpc on until cessation of development at latest in 10 dpc.</text>
</comment>
<comment type="similarity">
    <text evidence="7">Belongs to the TMEM8 family.</text>
</comment>
<evidence type="ECO:0000250" key="1">
    <source>
        <dbReference type="UniProtKB" id="Q9HCN3"/>
    </source>
</evidence>
<evidence type="ECO:0000255" key="2"/>
<evidence type="ECO:0000255" key="3">
    <source>
        <dbReference type="PROSITE-ProRule" id="PRU00076"/>
    </source>
</evidence>
<evidence type="ECO:0000269" key="4">
    <source>
    </source>
</evidence>
<evidence type="ECO:0000303" key="5">
    <source>
    </source>
</evidence>
<evidence type="ECO:0000303" key="6">
    <source>
    </source>
</evidence>
<evidence type="ECO:0000305" key="7"/>
<reference key="1">
    <citation type="journal article" date="2000" name="Biochem. Biophys. Res. Commun.">
        <title>Molecular cloning and chromosomal mapping of a novel five-span transmembrane protein gene, M83.</title>
        <authorList>
            <person name="Motohashi T."/>
            <person name="Miyoshi S."/>
            <person name="Osawa M."/>
            <person name="Eyre H.J."/>
            <person name="Sutherland G.R."/>
            <person name="Matsuda Y."/>
            <person name="Nakamura Y."/>
            <person name="Shibuya A."/>
            <person name="Iwama A."/>
            <person name="Nakauchi H."/>
        </authorList>
    </citation>
    <scope>NUCLEOTIDE SEQUENCE [MRNA] (ISOFORM ALPHA)</scope>
    <source>
        <tissue>Thymus</tissue>
    </source>
</reference>
<reference key="2">
    <citation type="journal article" date="2005" name="Science">
        <title>The transcriptional landscape of the mammalian genome.</title>
        <authorList>
            <person name="Carninci P."/>
            <person name="Kasukawa T."/>
            <person name="Katayama S."/>
            <person name="Gough J."/>
            <person name="Frith M.C."/>
            <person name="Maeda N."/>
            <person name="Oyama R."/>
            <person name="Ravasi T."/>
            <person name="Lenhard B."/>
            <person name="Wells C."/>
            <person name="Kodzius R."/>
            <person name="Shimokawa K."/>
            <person name="Bajic V.B."/>
            <person name="Brenner S.E."/>
            <person name="Batalov S."/>
            <person name="Forrest A.R."/>
            <person name="Zavolan M."/>
            <person name="Davis M.J."/>
            <person name="Wilming L.G."/>
            <person name="Aidinis V."/>
            <person name="Allen J.E."/>
            <person name="Ambesi-Impiombato A."/>
            <person name="Apweiler R."/>
            <person name="Aturaliya R.N."/>
            <person name="Bailey T.L."/>
            <person name="Bansal M."/>
            <person name="Baxter L."/>
            <person name="Beisel K.W."/>
            <person name="Bersano T."/>
            <person name="Bono H."/>
            <person name="Chalk A.M."/>
            <person name="Chiu K.P."/>
            <person name="Choudhary V."/>
            <person name="Christoffels A."/>
            <person name="Clutterbuck D.R."/>
            <person name="Crowe M.L."/>
            <person name="Dalla E."/>
            <person name="Dalrymple B.P."/>
            <person name="de Bono B."/>
            <person name="Della Gatta G."/>
            <person name="di Bernardo D."/>
            <person name="Down T."/>
            <person name="Engstrom P."/>
            <person name="Fagiolini M."/>
            <person name="Faulkner G."/>
            <person name="Fletcher C.F."/>
            <person name="Fukushima T."/>
            <person name="Furuno M."/>
            <person name="Futaki S."/>
            <person name="Gariboldi M."/>
            <person name="Georgii-Hemming P."/>
            <person name="Gingeras T.R."/>
            <person name="Gojobori T."/>
            <person name="Green R.E."/>
            <person name="Gustincich S."/>
            <person name="Harbers M."/>
            <person name="Hayashi Y."/>
            <person name="Hensch T.K."/>
            <person name="Hirokawa N."/>
            <person name="Hill D."/>
            <person name="Huminiecki L."/>
            <person name="Iacono M."/>
            <person name="Ikeo K."/>
            <person name="Iwama A."/>
            <person name="Ishikawa T."/>
            <person name="Jakt M."/>
            <person name="Kanapin A."/>
            <person name="Katoh M."/>
            <person name="Kawasawa Y."/>
            <person name="Kelso J."/>
            <person name="Kitamura H."/>
            <person name="Kitano H."/>
            <person name="Kollias G."/>
            <person name="Krishnan S.P."/>
            <person name="Kruger A."/>
            <person name="Kummerfeld S.K."/>
            <person name="Kurochkin I.V."/>
            <person name="Lareau L.F."/>
            <person name="Lazarevic D."/>
            <person name="Lipovich L."/>
            <person name="Liu J."/>
            <person name="Liuni S."/>
            <person name="McWilliam S."/>
            <person name="Madan Babu M."/>
            <person name="Madera M."/>
            <person name="Marchionni L."/>
            <person name="Matsuda H."/>
            <person name="Matsuzawa S."/>
            <person name="Miki H."/>
            <person name="Mignone F."/>
            <person name="Miyake S."/>
            <person name="Morris K."/>
            <person name="Mottagui-Tabar S."/>
            <person name="Mulder N."/>
            <person name="Nakano N."/>
            <person name="Nakauchi H."/>
            <person name="Ng P."/>
            <person name="Nilsson R."/>
            <person name="Nishiguchi S."/>
            <person name="Nishikawa S."/>
            <person name="Nori F."/>
            <person name="Ohara O."/>
            <person name="Okazaki Y."/>
            <person name="Orlando V."/>
            <person name="Pang K.C."/>
            <person name="Pavan W.J."/>
            <person name="Pavesi G."/>
            <person name="Pesole G."/>
            <person name="Petrovsky N."/>
            <person name="Piazza S."/>
            <person name="Reed J."/>
            <person name="Reid J.F."/>
            <person name="Ring B.Z."/>
            <person name="Ringwald M."/>
            <person name="Rost B."/>
            <person name="Ruan Y."/>
            <person name="Salzberg S.L."/>
            <person name="Sandelin A."/>
            <person name="Schneider C."/>
            <person name="Schoenbach C."/>
            <person name="Sekiguchi K."/>
            <person name="Semple C.A."/>
            <person name="Seno S."/>
            <person name="Sessa L."/>
            <person name="Sheng Y."/>
            <person name="Shibata Y."/>
            <person name="Shimada H."/>
            <person name="Shimada K."/>
            <person name="Silva D."/>
            <person name="Sinclair B."/>
            <person name="Sperling S."/>
            <person name="Stupka E."/>
            <person name="Sugiura K."/>
            <person name="Sultana R."/>
            <person name="Takenaka Y."/>
            <person name="Taki K."/>
            <person name="Tammoja K."/>
            <person name="Tan S.L."/>
            <person name="Tang S."/>
            <person name="Taylor M.S."/>
            <person name="Tegner J."/>
            <person name="Teichmann S.A."/>
            <person name="Ueda H.R."/>
            <person name="van Nimwegen E."/>
            <person name="Verardo R."/>
            <person name="Wei C.L."/>
            <person name="Yagi K."/>
            <person name="Yamanishi H."/>
            <person name="Zabarovsky E."/>
            <person name="Zhu S."/>
            <person name="Zimmer A."/>
            <person name="Hide W."/>
            <person name="Bult C."/>
            <person name="Grimmond S.M."/>
            <person name="Teasdale R.D."/>
            <person name="Liu E.T."/>
            <person name="Brusic V."/>
            <person name="Quackenbush J."/>
            <person name="Wahlestedt C."/>
            <person name="Mattick J.S."/>
            <person name="Hume D.A."/>
            <person name="Kai C."/>
            <person name="Sasaki D."/>
            <person name="Tomaru Y."/>
            <person name="Fukuda S."/>
            <person name="Kanamori-Katayama M."/>
            <person name="Suzuki M."/>
            <person name="Aoki J."/>
            <person name="Arakawa T."/>
            <person name="Iida J."/>
            <person name="Imamura K."/>
            <person name="Itoh M."/>
            <person name="Kato T."/>
            <person name="Kawaji H."/>
            <person name="Kawagashira N."/>
            <person name="Kawashima T."/>
            <person name="Kojima M."/>
            <person name="Kondo S."/>
            <person name="Konno H."/>
            <person name="Nakano K."/>
            <person name="Ninomiya N."/>
            <person name="Nishio T."/>
            <person name="Okada M."/>
            <person name="Plessy C."/>
            <person name="Shibata K."/>
            <person name="Shiraki T."/>
            <person name="Suzuki S."/>
            <person name="Tagami M."/>
            <person name="Waki K."/>
            <person name="Watahiki A."/>
            <person name="Okamura-Oho Y."/>
            <person name="Suzuki H."/>
            <person name="Kawai J."/>
            <person name="Hayashizaki Y."/>
        </authorList>
    </citation>
    <scope>NUCLEOTIDE SEQUENCE [LARGE SCALE MRNA] (ISOFORM ALPHA)</scope>
    <source>
        <strain>C57BL/6J</strain>
        <tissue>Retina</tissue>
    </source>
</reference>
<reference key="3">
    <citation type="journal article" date="2004" name="Genome Res.">
        <title>The status, quality, and expansion of the NIH full-length cDNA project: the Mammalian Gene Collection (MGC).</title>
        <authorList>
            <consortium name="The MGC Project Team"/>
        </authorList>
    </citation>
    <scope>NUCLEOTIDE SEQUENCE [LARGE SCALE MRNA] (ISOFORM BETA)</scope>
    <source>
        <tissue>Mammary gland</tissue>
    </source>
</reference>
<reference key="4">
    <citation type="journal article" date="2016" name="J. Cell Biol.">
        <title>A GPI processing phospholipase A2, PGAP6, modulates Nodal signaling in embryos by shedding CRIPTO.</title>
        <authorList>
            <person name="Lee G.H."/>
            <person name="Fujita M."/>
            <person name="Takaoka K."/>
            <person name="Murakami Y."/>
            <person name="Fujihara Y."/>
            <person name="Kanzawa N."/>
            <person name="Murakami K.I."/>
            <person name="Kajikawa E."/>
            <person name="Takada Y."/>
            <person name="Saito K."/>
            <person name="Ikawa M."/>
            <person name="Hamada H."/>
            <person name="Maeda Y."/>
            <person name="Kinoshita T."/>
        </authorList>
    </citation>
    <scope>DISRUPTION PHENOTYPE</scope>
</reference>
<protein>
    <recommendedName>
        <fullName>Post-GPI attachment to proteins factor 6</fullName>
        <ecNumber>3.1.1.4</ecNumber>
    </recommendedName>
    <alternativeName>
        <fullName>GPI processing phospholipase A2</fullName>
        <shortName>GPI-PLA2</shortName>
    </alternativeName>
    <alternativeName>
        <fullName>M83 protein</fullName>
    </alternativeName>
    <alternativeName>
        <fullName>Transmembrane protein 8</fullName>
    </alternativeName>
    <alternativeName>
        <fullName>Transmembrane protein 8A</fullName>
    </alternativeName>
</protein>
<accession>Q9ESN3</accession>
<accession>Q543X8</accession>
<accession>Q99JS5</accession>
<dbReference type="EC" id="3.1.1.4"/>
<dbReference type="EMBL" id="AB045293">
    <property type="protein sequence ID" value="BAB16377.1"/>
    <property type="molecule type" value="mRNA"/>
</dbReference>
<dbReference type="EMBL" id="AK044384">
    <property type="protein sequence ID" value="BAC31896.1"/>
    <property type="molecule type" value="mRNA"/>
</dbReference>
<dbReference type="EMBL" id="BC005722">
    <property type="protein sequence ID" value="AAH05722.1"/>
    <property type="molecule type" value="mRNA"/>
</dbReference>
<dbReference type="CCDS" id="CCDS28546.1">
    <molecule id="Q9ESN3-1"/>
</dbReference>
<dbReference type="RefSeq" id="NP_068565.1">
    <molecule id="Q9ESN3-1"/>
    <property type="nucleotide sequence ID" value="NM_021793.2"/>
</dbReference>
<dbReference type="SMR" id="Q9ESN3"/>
<dbReference type="FunCoup" id="Q9ESN3">
    <property type="interactions" value="727"/>
</dbReference>
<dbReference type="STRING" id="10090.ENSMUSP00000025010"/>
<dbReference type="GlyCosmos" id="Q9ESN3">
    <property type="glycosylation" value="2 sites, No reported glycans"/>
</dbReference>
<dbReference type="GlyGen" id="Q9ESN3">
    <property type="glycosylation" value="4 sites, 1 N-linked glycan (1 site)"/>
</dbReference>
<dbReference type="PhosphoSitePlus" id="Q9ESN3"/>
<dbReference type="PaxDb" id="10090-ENSMUSP00000025010"/>
<dbReference type="ProteomicsDB" id="259433">
    <molecule id="Q9ESN3-1"/>
</dbReference>
<dbReference type="ProteomicsDB" id="259434">
    <molecule id="Q9ESN3-2"/>
</dbReference>
<dbReference type="Antibodypedia" id="55489">
    <property type="antibodies" value="21 antibodies from 10 providers"/>
</dbReference>
<dbReference type="DNASU" id="60455"/>
<dbReference type="Ensembl" id="ENSMUST00000025010.14">
    <molecule id="Q9ESN3-1"/>
    <property type="protein sequence ID" value="ENSMUSP00000025010.8"/>
    <property type="gene ID" value="ENSMUSG00000024180.15"/>
</dbReference>
<dbReference type="Ensembl" id="ENSMUST00000128597.3">
    <molecule id="Q9ESN3-2"/>
    <property type="protein sequence ID" value="ENSMUSP00000121651.3"/>
    <property type="gene ID" value="ENSMUSG00000024180.15"/>
</dbReference>
<dbReference type="GeneID" id="60455"/>
<dbReference type="KEGG" id="mmu:60455"/>
<dbReference type="UCSC" id="uc008bdj.2">
    <molecule id="Q9ESN3-1"/>
    <property type="organism name" value="mouse"/>
</dbReference>
<dbReference type="UCSC" id="uc008bdk.1">
    <molecule id="Q9ESN3-2"/>
    <property type="organism name" value="mouse"/>
</dbReference>
<dbReference type="AGR" id="MGI:1926283"/>
<dbReference type="CTD" id="58986"/>
<dbReference type="MGI" id="MGI:1926283">
    <property type="gene designation" value="Pgap6"/>
</dbReference>
<dbReference type="VEuPathDB" id="HostDB:ENSMUSG00000024180"/>
<dbReference type="eggNOG" id="ENOG502QQ7Q">
    <property type="taxonomic scope" value="Eukaryota"/>
</dbReference>
<dbReference type="GeneTree" id="ENSGT00940000160060"/>
<dbReference type="HOGENOM" id="CLU_012979_1_0_1"/>
<dbReference type="InParanoid" id="Q9ESN3"/>
<dbReference type="OMA" id="AKRRHCY"/>
<dbReference type="OrthoDB" id="69646at2759"/>
<dbReference type="PhylomeDB" id="Q9ESN3"/>
<dbReference type="TreeFam" id="TF331003"/>
<dbReference type="BioGRID-ORCS" id="60455">
    <property type="hits" value="0 hits in 81 CRISPR screens"/>
</dbReference>
<dbReference type="ChiTaRS" id="Tmem8">
    <property type="organism name" value="mouse"/>
</dbReference>
<dbReference type="PRO" id="PR:Q9ESN3"/>
<dbReference type="Proteomes" id="UP000000589">
    <property type="component" value="Chromosome 17"/>
</dbReference>
<dbReference type="RNAct" id="Q9ESN3">
    <property type="molecule type" value="protein"/>
</dbReference>
<dbReference type="Bgee" id="ENSMUSG00000024180">
    <property type="expression patterns" value="Expressed in right kidney and 149 other cell types or tissues"/>
</dbReference>
<dbReference type="ExpressionAtlas" id="Q9ESN3">
    <property type="expression patterns" value="baseline and differential"/>
</dbReference>
<dbReference type="GO" id="GO:0005765">
    <property type="term" value="C:lysosomal membrane"/>
    <property type="evidence" value="ECO:0007669"/>
    <property type="project" value="UniProtKB-SubCell"/>
</dbReference>
<dbReference type="GO" id="GO:0005886">
    <property type="term" value="C:plasma membrane"/>
    <property type="evidence" value="ECO:0000303"/>
    <property type="project" value="UniProtKB"/>
</dbReference>
<dbReference type="GO" id="GO:0004623">
    <property type="term" value="F:phospholipase A2 activity"/>
    <property type="evidence" value="ECO:0007669"/>
    <property type="project" value="UniProtKB-EC"/>
</dbReference>
<dbReference type="GO" id="GO:0006629">
    <property type="term" value="P:lipid metabolic process"/>
    <property type="evidence" value="ECO:0007669"/>
    <property type="project" value="UniProtKB-KW"/>
</dbReference>
<dbReference type="InterPro" id="IPR000742">
    <property type="entry name" value="EGF-like_dom"/>
</dbReference>
<dbReference type="InterPro" id="IPR021910">
    <property type="entry name" value="NGX6/PGAP6/MYMK"/>
</dbReference>
<dbReference type="PANTHER" id="PTHR14319">
    <property type="entry name" value="FIVE-SPAN TRANSMEMBRANE PROTEIN M83"/>
    <property type="match status" value="1"/>
</dbReference>
<dbReference type="PANTHER" id="PTHR14319:SF7">
    <property type="entry name" value="POST-GPI ATTACHMENT TO PROTEINS FACTOR 6"/>
    <property type="match status" value="1"/>
</dbReference>
<dbReference type="Pfam" id="PF12036">
    <property type="entry name" value="DUF3522"/>
    <property type="match status" value="1"/>
</dbReference>
<dbReference type="PROSITE" id="PS00022">
    <property type="entry name" value="EGF_1"/>
    <property type="match status" value="1"/>
</dbReference>
<dbReference type="PROSITE" id="PS01186">
    <property type="entry name" value="EGF_2"/>
    <property type="match status" value="1"/>
</dbReference>
<dbReference type="PROSITE" id="PS50026">
    <property type="entry name" value="EGF_3"/>
    <property type="match status" value="1"/>
</dbReference>
<gene>
    <name evidence="6" type="primary">Pgap6</name>
    <name type="synonym">Tmem8</name>
    <name type="synonym">Tmem8a</name>
</gene>
<feature type="signal peptide" evidence="2">
    <location>
        <begin position="1"/>
        <end position="33"/>
    </location>
</feature>
<feature type="chain" id="PRO_0000022540" description="Post-GPI attachment to proteins factor 6">
    <location>
        <begin position="34"/>
        <end position="769"/>
    </location>
</feature>
<feature type="topological domain" description="Extracellular" evidence="2">
    <location>
        <begin position="34"/>
        <end position="543"/>
    </location>
</feature>
<feature type="transmembrane region" description="Helical" evidence="2">
    <location>
        <begin position="544"/>
        <end position="564"/>
    </location>
</feature>
<feature type="topological domain" description="Cytoplasmic" evidence="2">
    <location>
        <begin position="565"/>
        <end position="567"/>
    </location>
</feature>
<feature type="transmembrane region" description="Helical" evidence="2">
    <location>
        <begin position="568"/>
        <end position="588"/>
    </location>
</feature>
<feature type="topological domain" description="Extracellular" evidence="2">
    <location>
        <begin position="589"/>
        <end position="603"/>
    </location>
</feature>
<feature type="transmembrane region" description="Helical" evidence="2">
    <location>
        <begin position="604"/>
        <end position="624"/>
    </location>
</feature>
<feature type="topological domain" description="Cytoplasmic" evidence="2">
    <location>
        <begin position="625"/>
        <end position="627"/>
    </location>
</feature>
<feature type="transmembrane region" description="Helical" evidence="2">
    <location>
        <begin position="628"/>
        <end position="648"/>
    </location>
</feature>
<feature type="topological domain" description="Extracellular" evidence="2">
    <location>
        <begin position="649"/>
        <end position="651"/>
    </location>
</feature>
<feature type="transmembrane region" description="Helical" evidence="2">
    <location>
        <begin position="652"/>
        <end position="672"/>
    </location>
</feature>
<feature type="topological domain" description="Cytoplasmic" evidence="2">
    <location>
        <begin position="673"/>
        <end position="688"/>
    </location>
</feature>
<feature type="transmembrane region" description="Helical" evidence="2">
    <location>
        <begin position="689"/>
        <end position="709"/>
    </location>
</feature>
<feature type="topological domain" description="Extracellular" evidence="2">
    <location>
        <begin position="710"/>
        <end position="715"/>
    </location>
</feature>
<feature type="transmembrane region" description="Helical" evidence="2">
    <location>
        <begin position="716"/>
        <end position="736"/>
    </location>
</feature>
<feature type="topological domain" description="Cytoplasmic" evidence="2">
    <location>
        <begin position="737"/>
        <end position="769"/>
    </location>
</feature>
<feature type="domain" description="EGF-like" evidence="3">
    <location>
        <begin position="495"/>
        <end position="531"/>
    </location>
</feature>
<feature type="glycosylation site" description="N-linked (GlcNAc...) asparagine" evidence="2">
    <location>
        <position position="138"/>
    </location>
</feature>
<feature type="glycosylation site" description="N-linked (GlcNAc...) asparagine" evidence="2">
    <location>
        <position position="411"/>
    </location>
</feature>
<feature type="disulfide bond" evidence="3">
    <location>
        <begin position="496"/>
        <end position="506"/>
    </location>
</feature>
<feature type="disulfide bond" evidence="3">
    <location>
        <begin position="500"/>
        <end position="519"/>
    </location>
</feature>
<feature type="disulfide bond" evidence="3">
    <location>
        <begin position="521"/>
        <end position="530"/>
    </location>
</feature>
<feature type="splice variant" id="VSP_004005" description="In isoform Beta." evidence="5">
    <original>MGRVGAGGTAREAATGSLLLLLLLLARPPPAAASNSKES</original>
    <variation>MLPVCLPHLPDCHLFPV</variation>
    <location>
        <begin position="1"/>
        <end position="39"/>
    </location>
</feature>
<feature type="sequence conflict" description="In Ref. 3; AAH05722." evidence="7" ref="3">
    <original>S</original>
    <variation>G</variation>
    <location>
        <position position="88"/>
    </location>
</feature>
<feature type="sequence conflict" description="In Ref. 3; AAH05722." evidence="7" ref="3">
    <original>D</original>
    <variation>A</variation>
    <location>
        <position position="150"/>
    </location>
</feature>
<name>PGAP6_MOUSE</name>
<keyword id="KW-0025">Alternative splicing</keyword>
<keyword id="KW-1003">Cell membrane</keyword>
<keyword id="KW-1015">Disulfide bond</keyword>
<keyword id="KW-0245">EGF-like domain</keyword>
<keyword id="KW-0325">Glycoprotein</keyword>
<keyword id="KW-0378">Hydrolase</keyword>
<keyword id="KW-0443">Lipid metabolism</keyword>
<keyword id="KW-0458">Lysosome</keyword>
<keyword id="KW-0472">Membrane</keyword>
<keyword id="KW-1185">Reference proteome</keyword>
<keyword id="KW-0732">Signal</keyword>
<keyword id="KW-0812">Transmembrane</keyword>
<keyword id="KW-1133">Transmembrane helix</keyword>
<sequence length="769" mass="85329">MGRVGAGGTAREAATGSLLLLLLLLARPPPAAASNSKESEAGLVSEHFSQAPQKLSFYSWYGSTRLFHFRVPPDTVLLRWLLHVSQGSPSCTDEEITVHFRYGAPPVINPLGTSFPDNTLSHASFHIRALLSTLMLDNTSVNISHPAPGDWFLVAHLPPSSQKIQVKGFVPTCAYIFQPDMLVMRVVEVSTLEPDVPLPQTLLSYPSYLKIFVPEYTQELRLELQGCVSSVSPGCPVRVTVGATTLPRNFQRVLTCTGLAPSCHLLLSSPPWGRWLQVTFESLAEPHVTVGFTAKAVFTVCRPWSVTIHHLIQNNPNQTYDTSAIQLSQSAVHRDLGRSSRVDSGPFCLLNYPVLREDTDVVSVHFQPLNGAFVLVHSSMPSVMQLRLDTGMDSGGSFIIVLRTNKTEVTNGTLVAACVNAASPFLSFNTSLNCTTAFFQGYPMFLRASSHMANLIMPFPETDNWYLSLQLVCPESPEDCEQAVVRVETILYLVPCLNDCGPYGQCLLLRRYGYVYAGCSCKAGWRGWSCTDNSTAQTVAQQRAAALLLTLSNLMFLAPIAISLHRSFLVEASVYFYTMFFSTFYHACDQPGEAVLCILSYDTLQYCDFLGSGASTWVTILCMARLKTILKQVLLVLGTLVIAMSLQMDRRGIWNLMGPCVFAFVIMASMWIYRCGHRGQCYPTSWQRWVFYLLPGISMASVGIAMYTSMMTSDNYYYTHSIWHILLAGSAAFLLPPREEKAGSWACLQKFPCHYQICRNDRDELYTVT</sequence>
<organism>
    <name type="scientific">Mus musculus</name>
    <name type="common">Mouse</name>
    <dbReference type="NCBI Taxonomy" id="10090"/>
    <lineage>
        <taxon>Eukaryota</taxon>
        <taxon>Metazoa</taxon>
        <taxon>Chordata</taxon>
        <taxon>Craniata</taxon>
        <taxon>Vertebrata</taxon>
        <taxon>Euteleostomi</taxon>
        <taxon>Mammalia</taxon>
        <taxon>Eutheria</taxon>
        <taxon>Euarchontoglires</taxon>
        <taxon>Glires</taxon>
        <taxon>Rodentia</taxon>
        <taxon>Myomorpha</taxon>
        <taxon>Muroidea</taxon>
        <taxon>Muridae</taxon>
        <taxon>Murinae</taxon>
        <taxon>Mus</taxon>
        <taxon>Mus</taxon>
    </lineage>
</organism>